<feature type="chain" id="PRO_1000129766" description="Argininosuccinate synthase">
    <location>
        <begin position="1"/>
        <end position="447"/>
    </location>
</feature>
<feature type="binding site" evidence="1">
    <location>
        <begin position="17"/>
        <end position="25"/>
    </location>
    <ligand>
        <name>ATP</name>
        <dbReference type="ChEBI" id="CHEBI:30616"/>
    </ligand>
</feature>
<feature type="binding site" evidence="1">
    <location>
        <position position="43"/>
    </location>
    <ligand>
        <name>ATP</name>
        <dbReference type="ChEBI" id="CHEBI:30616"/>
    </ligand>
</feature>
<feature type="binding site" evidence="1">
    <location>
        <position position="99"/>
    </location>
    <ligand>
        <name>L-citrulline</name>
        <dbReference type="ChEBI" id="CHEBI:57743"/>
    </ligand>
</feature>
<feature type="binding site" evidence="1">
    <location>
        <position position="129"/>
    </location>
    <ligand>
        <name>ATP</name>
        <dbReference type="ChEBI" id="CHEBI:30616"/>
    </ligand>
</feature>
<feature type="binding site" evidence="1">
    <location>
        <position position="131"/>
    </location>
    <ligand>
        <name>ATP</name>
        <dbReference type="ChEBI" id="CHEBI:30616"/>
    </ligand>
</feature>
<feature type="binding site" evidence="1">
    <location>
        <position position="131"/>
    </location>
    <ligand>
        <name>L-aspartate</name>
        <dbReference type="ChEBI" id="CHEBI:29991"/>
    </ligand>
</feature>
<feature type="binding site" evidence="1">
    <location>
        <position position="135"/>
    </location>
    <ligand>
        <name>L-aspartate</name>
        <dbReference type="ChEBI" id="CHEBI:29991"/>
    </ligand>
</feature>
<feature type="binding site" evidence="1">
    <location>
        <position position="135"/>
    </location>
    <ligand>
        <name>L-citrulline</name>
        <dbReference type="ChEBI" id="CHEBI:57743"/>
    </ligand>
</feature>
<feature type="binding site" evidence="1">
    <location>
        <position position="136"/>
    </location>
    <ligand>
        <name>ATP</name>
        <dbReference type="ChEBI" id="CHEBI:30616"/>
    </ligand>
</feature>
<feature type="binding site" evidence="1">
    <location>
        <position position="136"/>
    </location>
    <ligand>
        <name>L-aspartate</name>
        <dbReference type="ChEBI" id="CHEBI:29991"/>
    </ligand>
</feature>
<feature type="binding site" evidence="1">
    <location>
        <position position="139"/>
    </location>
    <ligand>
        <name>L-citrulline</name>
        <dbReference type="ChEBI" id="CHEBI:57743"/>
    </ligand>
</feature>
<feature type="binding site" evidence="1">
    <location>
        <position position="192"/>
    </location>
    <ligand>
        <name>L-citrulline</name>
        <dbReference type="ChEBI" id="CHEBI:57743"/>
    </ligand>
</feature>
<feature type="binding site" evidence="1">
    <location>
        <position position="194"/>
    </location>
    <ligand>
        <name>ATP</name>
        <dbReference type="ChEBI" id="CHEBI:30616"/>
    </ligand>
</feature>
<feature type="binding site" evidence="1">
    <location>
        <position position="201"/>
    </location>
    <ligand>
        <name>L-citrulline</name>
        <dbReference type="ChEBI" id="CHEBI:57743"/>
    </ligand>
</feature>
<feature type="binding site" evidence="1">
    <location>
        <position position="203"/>
    </location>
    <ligand>
        <name>L-citrulline</name>
        <dbReference type="ChEBI" id="CHEBI:57743"/>
    </ligand>
</feature>
<feature type="binding site" evidence="1">
    <location>
        <position position="280"/>
    </location>
    <ligand>
        <name>L-citrulline</name>
        <dbReference type="ChEBI" id="CHEBI:57743"/>
    </ligand>
</feature>
<reference key="1">
    <citation type="journal article" date="2011" name="J. Bacteriol.">
        <title>Comparative genomics of 28 Salmonella enterica isolates: evidence for CRISPR-mediated adaptive sublineage evolution.</title>
        <authorList>
            <person name="Fricke W.F."/>
            <person name="Mammel M.K."/>
            <person name="McDermott P.F."/>
            <person name="Tartera C."/>
            <person name="White D.G."/>
            <person name="Leclerc J.E."/>
            <person name="Ravel J."/>
            <person name="Cebula T.A."/>
        </authorList>
    </citation>
    <scope>NUCLEOTIDE SEQUENCE [LARGE SCALE GENOMIC DNA]</scope>
    <source>
        <strain>SL476</strain>
    </source>
</reference>
<accession>B4TJ09</accession>
<evidence type="ECO:0000255" key="1">
    <source>
        <dbReference type="HAMAP-Rule" id="MF_00581"/>
    </source>
</evidence>
<keyword id="KW-0028">Amino-acid biosynthesis</keyword>
<keyword id="KW-0055">Arginine biosynthesis</keyword>
<keyword id="KW-0067">ATP-binding</keyword>
<keyword id="KW-0963">Cytoplasm</keyword>
<keyword id="KW-0436">Ligase</keyword>
<keyword id="KW-0547">Nucleotide-binding</keyword>
<protein>
    <recommendedName>
        <fullName evidence="1">Argininosuccinate synthase</fullName>
        <ecNumber evidence="1">6.3.4.5</ecNumber>
    </recommendedName>
    <alternativeName>
        <fullName evidence="1">Citrulline--aspartate ligase</fullName>
    </alternativeName>
</protein>
<name>ASSY_SALHS</name>
<dbReference type="EC" id="6.3.4.5" evidence="1"/>
<dbReference type="EMBL" id="CP001120">
    <property type="protein sequence ID" value="ACF70158.1"/>
    <property type="molecule type" value="Genomic_DNA"/>
</dbReference>
<dbReference type="RefSeq" id="WP_000207660.1">
    <property type="nucleotide sequence ID" value="NC_011083.1"/>
</dbReference>
<dbReference type="SMR" id="B4TJ09"/>
<dbReference type="KEGG" id="seh:SeHA_C3585"/>
<dbReference type="HOGENOM" id="CLU_032784_4_1_6"/>
<dbReference type="UniPathway" id="UPA00068">
    <property type="reaction ID" value="UER00113"/>
</dbReference>
<dbReference type="Proteomes" id="UP000001866">
    <property type="component" value="Chromosome"/>
</dbReference>
<dbReference type="GO" id="GO:0005737">
    <property type="term" value="C:cytoplasm"/>
    <property type="evidence" value="ECO:0007669"/>
    <property type="project" value="UniProtKB-SubCell"/>
</dbReference>
<dbReference type="GO" id="GO:0004055">
    <property type="term" value="F:argininosuccinate synthase activity"/>
    <property type="evidence" value="ECO:0007669"/>
    <property type="project" value="UniProtKB-UniRule"/>
</dbReference>
<dbReference type="GO" id="GO:0005524">
    <property type="term" value="F:ATP binding"/>
    <property type="evidence" value="ECO:0007669"/>
    <property type="project" value="UniProtKB-UniRule"/>
</dbReference>
<dbReference type="GO" id="GO:0042803">
    <property type="term" value="F:protein homodimerization activity"/>
    <property type="evidence" value="ECO:0007669"/>
    <property type="project" value="InterPro"/>
</dbReference>
<dbReference type="GO" id="GO:0000053">
    <property type="term" value="P:argininosuccinate metabolic process"/>
    <property type="evidence" value="ECO:0007669"/>
    <property type="project" value="TreeGrafter"/>
</dbReference>
<dbReference type="GO" id="GO:0006526">
    <property type="term" value="P:L-arginine biosynthetic process"/>
    <property type="evidence" value="ECO:0007669"/>
    <property type="project" value="UniProtKB-UniRule"/>
</dbReference>
<dbReference type="GO" id="GO:0000050">
    <property type="term" value="P:urea cycle"/>
    <property type="evidence" value="ECO:0007669"/>
    <property type="project" value="TreeGrafter"/>
</dbReference>
<dbReference type="CDD" id="cd01999">
    <property type="entry name" value="ASS"/>
    <property type="match status" value="1"/>
</dbReference>
<dbReference type="FunFam" id="1.10.287.400:FF:000001">
    <property type="entry name" value="Argininosuccinate synthase"/>
    <property type="match status" value="1"/>
</dbReference>
<dbReference type="Gene3D" id="1.10.287.400">
    <property type="match status" value="1"/>
</dbReference>
<dbReference type="Gene3D" id="3.90.1260.10">
    <property type="entry name" value="Argininosuccinate synthetase, chain A, domain 2"/>
    <property type="match status" value="1"/>
</dbReference>
<dbReference type="Gene3D" id="3.40.50.620">
    <property type="entry name" value="HUPs"/>
    <property type="match status" value="1"/>
</dbReference>
<dbReference type="HAMAP" id="MF_00581">
    <property type="entry name" value="Arg_succ_synth_type2"/>
    <property type="match status" value="1"/>
</dbReference>
<dbReference type="InterPro" id="IPR023437">
    <property type="entry name" value="Arg_succ_synth_type2_subfam"/>
</dbReference>
<dbReference type="InterPro" id="IPR048268">
    <property type="entry name" value="Arginosuc_syn_C"/>
</dbReference>
<dbReference type="InterPro" id="IPR048267">
    <property type="entry name" value="Arginosuc_syn_N"/>
</dbReference>
<dbReference type="InterPro" id="IPR001518">
    <property type="entry name" value="Arginosuc_synth"/>
</dbReference>
<dbReference type="InterPro" id="IPR018223">
    <property type="entry name" value="Arginosuc_synth_CS"/>
</dbReference>
<dbReference type="InterPro" id="IPR023434">
    <property type="entry name" value="Arginosuc_synth_type_1_subfam"/>
</dbReference>
<dbReference type="InterPro" id="IPR024074">
    <property type="entry name" value="AS_cat/multimer_dom_body"/>
</dbReference>
<dbReference type="InterPro" id="IPR024073">
    <property type="entry name" value="AS_multimer_C_tail"/>
</dbReference>
<dbReference type="InterPro" id="IPR014729">
    <property type="entry name" value="Rossmann-like_a/b/a_fold"/>
</dbReference>
<dbReference type="NCBIfam" id="TIGR00032">
    <property type="entry name" value="argG"/>
    <property type="match status" value="1"/>
</dbReference>
<dbReference type="NCBIfam" id="NF003779">
    <property type="entry name" value="PRK05370.1"/>
    <property type="match status" value="1"/>
</dbReference>
<dbReference type="PANTHER" id="PTHR11587">
    <property type="entry name" value="ARGININOSUCCINATE SYNTHASE"/>
    <property type="match status" value="1"/>
</dbReference>
<dbReference type="PANTHER" id="PTHR11587:SF2">
    <property type="entry name" value="ARGININOSUCCINATE SYNTHASE"/>
    <property type="match status" value="1"/>
</dbReference>
<dbReference type="Pfam" id="PF20979">
    <property type="entry name" value="Arginosuc_syn_C"/>
    <property type="match status" value="1"/>
</dbReference>
<dbReference type="Pfam" id="PF00764">
    <property type="entry name" value="Arginosuc_synth"/>
    <property type="match status" value="1"/>
</dbReference>
<dbReference type="SUPFAM" id="SSF52402">
    <property type="entry name" value="Adenine nucleotide alpha hydrolases-like"/>
    <property type="match status" value="1"/>
</dbReference>
<dbReference type="SUPFAM" id="SSF69864">
    <property type="entry name" value="Argininosuccinate synthetase, C-terminal domain"/>
    <property type="match status" value="1"/>
</dbReference>
<dbReference type="PROSITE" id="PS00564">
    <property type="entry name" value="ARGININOSUCCIN_SYN_1"/>
    <property type="match status" value="1"/>
</dbReference>
<dbReference type="PROSITE" id="PS00565">
    <property type="entry name" value="ARGININOSUCCIN_SYN_2"/>
    <property type="match status" value="1"/>
</dbReference>
<proteinExistence type="inferred from homology"/>
<sequence length="447" mass="49794">MTTILKHLPAGQRIGIAFSGGLDTSAALLWMRQKGAVPYAYTANLGQPDEDDYDAIPRRAMEYGAENARLIDCRKQLVAEGIAAIQCGAFHNTTGGLTYFNTTPLGRAVTGTMLVAAMKEDGVNIWGDGSTYKGNDIERFYRYGLLTNVELQIYKPWLDTDFIDELGGRHEMSEFMIACGFDYKMSVEKAYSTDSNMLGATHEAKDLEFLNSSVKIVNPIMGVKFWDESVKIPAEVVTVRFEQGHPVALNGKTFSDDVEMMLEANRIGGRHGLGMSDQIENRIIEAKSRGIYEAPGMALLHIAYERLLTGIHNEDTIEQYHSHGRQLGKLLYQGRWFDSQALMLRDGLQRWVASQITGEVTLELRRGNDYSILNTVSDNLTYKPERLTMEKGDSVFSPDDRIGQLTMRNLDITDTREKLFGYAKAGLLTASSATGLPQVENLENKGK</sequence>
<gene>
    <name evidence="1" type="primary">argG</name>
    <name type="ordered locus">SeHA_C3585</name>
</gene>
<comment type="catalytic activity">
    <reaction evidence="1">
        <text>L-citrulline + L-aspartate + ATP = 2-(N(omega)-L-arginino)succinate + AMP + diphosphate + H(+)</text>
        <dbReference type="Rhea" id="RHEA:10932"/>
        <dbReference type="ChEBI" id="CHEBI:15378"/>
        <dbReference type="ChEBI" id="CHEBI:29991"/>
        <dbReference type="ChEBI" id="CHEBI:30616"/>
        <dbReference type="ChEBI" id="CHEBI:33019"/>
        <dbReference type="ChEBI" id="CHEBI:57472"/>
        <dbReference type="ChEBI" id="CHEBI:57743"/>
        <dbReference type="ChEBI" id="CHEBI:456215"/>
        <dbReference type="EC" id="6.3.4.5"/>
    </reaction>
</comment>
<comment type="pathway">
    <text evidence="1">Amino-acid biosynthesis; L-arginine biosynthesis; L-arginine from L-ornithine and carbamoyl phosphate: step 2/3.</text>
</comment>
<comment type="subunit">
    <text evidence="1">Homotetramer.</text>
</comment>
<comment type="subcellular location">
    <subcellularLocation>
        <location evidence="1">Cytoplasm</location>
    </subcellularLocation>
</comment>
<comment type="similarity">
    <text evidence="1">Belongs to the argininosuccinate synthase family. Type 2 subfamily.</text>
</comment>
<organism>
    <name type="scientific">Salmonella heidelberg (strain SL476)</name>
    <dbReference type="NCBI Taxonomy" id="454169"/>
    <lineage>
        <taxon>Bacteria</taxon>
        <taxon>Pseudomonadati</taxon>
        <taxon>Pseudomonadota</taxon>
        <taxon>Gammaproteobacteria</taxon>
        <taxon>Enterobacterales</taxon>
        <taxon>Enterobacteriaceae</taxon>
        <taxon>Salmonella</taxon>
    </lineage>
</organism>